<dbReference type="EC" id="2.7.7.48"/>
<dbReference type="EMBL" id="AP003200">
    <property type="protein sequence ID" value="BAD73220.1"/>
    <property type="status" value="ALT_SEQ"/>
    <property type="molecule type" value="Genomic_DNA"/>
</dbReference>
<dbReference type="EMBL" id="AP003200">
    <property type="protein sequence ID" value="BAD73221.1"/>
    <property type="status" value="ALT_SEQ"/>
    <property type="molecule type" value="Genomic_DNA"/>
</dbReference>
<dbReference type="EMBL" id="AP003244">
    <property type="protein sequence ID" value="BAD73327.1"/>
    <property type="status" value="ALT_SEQ"/>
    <property type="molecule type" value="Genomic_DNA"/>
</dbReference>
<dbReference type="EMBL" id="AP003244">
    <property type="protein sequence ID" value="BAD73328.1"/>
    <property type="status" value="ALT_SEQ"/>
    <property type="molecule type" value="Genomic_DNA"/>
</dbReference>
<dbReference type="EMBL" id="AP008207">
    <property type="protein sequence ID" value="BAF04217.1"/>
    <property type="status" value="ALT_SEQ"/>
    <property type="molecule type" value="Genomic_DNA"/>
</dbReference>
<dbReference type="EMBL" id="AP014957">
    <property type="status" value="NOT_ANNOTATED_CDS"/>
    <property type="molecule type" value="Genomic_DNA"/>
</dbReference>
<dbReference type="EMBL" id="CM000138">
    <property type="protein sequence ID" value="EEE54052.1"/>
    <property type="status" value="ALT_SEQ"/>
    <property type="molecule type" value="Genomic_DNA"/>
</dbReference>
<dbReference type="EMBL" id="AK105570">
    <property type="status" value="NOT_ANNOTATED_CDS"/>
    <property type="molecule type" value="mRNA"/>
</dbReference>
<dbReference type="RefSeq" id="XP_015628373.1">
    <property type="nucleotide sequence ID" value="XM_015772887.1"/>
</dbReference>
<dbReference type="SMR" id="Q5QMN5"/>
<dbReference type="FunCoup" id="Q5QMN5">
    <property type="interactions" value="62"/>
</dbReference>
<dbReference type="STRING" id="39947.Q5QMN5"/>
<dbReference type="PaxDb" id="39947-Q5QMN5"/>
<dbReference type="KEGG" id="dosa:Os01g0197900"/>
<dbReference type="eggNOG" id="KOG0988">
    <property type="taxonomic scope" value="Eukaryota"/>
</dbReference>
<dbReference type="InParanoid" id="Q5QMN5"/>
<dbReference type="Proteomes" id="UP000000763">
    <property type="component" value="Chromosome 1"/>
</dbReference>
<dbReference type="Proteomes" id="UP000007752">
    <property type="component" value="Chromosome 1"/>
</dbReference>
<dbReference type="Proteomes" id="UP000059680">
    <property type="component" value="Chromosome 1"/>
</dbReference>
<dbReference type="GO" id="GO:0031380">
    <property type="term" value="C:nuclear RNA-directed RNA polymerase complex"/>
    <property type="evidence" value="ECO:0000318"/>
    <property type="project" value="GO_Central"/>
</dbReference>
<dbReference type="GO" id="GO:0003723">
    <property type="term" value="F:RNA binding"/>
    <property type="evidence" value="ECO:0007669"/>
    <property type="project" value="UniProtKB-KW"/>
</dbReference>
<dbReference type="GO" id="GO:0003968">
    <property type="term" value="F:RNA-directed RNA polymerase activity"/>
    <property type="evidence" value="ECO:0000318"/>
    <property type="project" value="GO_Central"/>
</dbReference>
<dbReference type="GO" id="GO:0030422">
    <property type="term" value="P:siRNA processing"/>
    <property type="evidence" value="ECO:0000318"/>
    <property type="project" value="GO_Central"/>
</dbReference>
<dbReference type="InterPro" id="IPR007855">
    <property type="entry name" value="RNA-dep_RNA_pol_euk-typ"/>
</dbReference>
<dbReference type="PANTHER" id="PTHR23079">
    <property type="entry name" value="RNA-DEPENDENT RNA POLYMERASE"/>
    <property type="match status" value="1"/>
</dbReference>
<dbReference type="PANTHER" id="PTHR23079:SF55">
    <property type="entry name" value="RNA-DIRECTED RNA POLYMERASE"/>
    <property type="match status" value="1"/>
</dbReference>
<dbReference type="Pfam" id="PF05183">
    <property type="entry name" value="RdRP"/>
    <property type="match status" value="1"/>
</dbReference>
<protein>
    <recommendedName>
        <fullName>Probable RNA-dependent RNA polymerase 3</fullName>
        <shortName>OsRDR3</shortName>
        <ecNumber>2.7.7.48</ecNumber>
    </recommendedName>
</protein>
<organism>
    <name type="scientific">Oryza sativa subsp. japonica</name>
    <name type="common">Rice</name>
    <dbReference type="NCBI Taxonomy" id="39947"/>
    <lineage>
        <taxon>Eukaryota</taxon>
        <taxon>Viridiplantae</taxon>
        <taxon>Streptophyta</taxon>
        <taxon>Embryophyta</taxon>
        <taxon>Tracheophyta</taxon>
        <taxon>Spermatophyta</taxon>
        <taxon>Magnoliopsida</taxon>
        <taxon>Liliopsida</taxon>
        <taxon>Poales</taxon>
        <taxon>Poaceae</taxon>
        <taxon>BOP clade</taxon>
        <taxon>Oryzoideae</taxon>
        <taxon>Oryzeae</taxon>
        <taxon>Oryzinae</taxon>
        <taxon>Oryza</taxon>
        <taxon>Oryza sativa</taxon>
    </lineage>
</organism>
<gene>
    <name type="primary">RDR3</name>
    <name type="ordered locus">Os01g0197900</name>
    <name type="ordered locus">LOC_Os01g10130</name>
    <name type="ORF">B1046G12.12</name>
    <name type="ORF">B1046G12.13</name>
    <name type="ORF">OsJ_00745</name>
    <name type="ORF">P0419B01.24</name>
    <name type="ORF">P0419B01.25</name>
</gene>
<sequence>MYNPIGSAEAREPAELPAAVAAELERLEGRLRQLAGAEARRHLAVLGEAGAARVLRAVAESRRVRTLPGFIKYLAKREAAITRRDARGVPTALSAPAFISGPSREEESVYTQLFDNEVQMYDQSPSNEMATSLSNHGMVEVGSPNQQMPFHLHGNGGSVRQIARLVPQLAQLTVESPCGHTSSVSQNQGCIEVGTPTQAMVSPGLNQMALPCRCMPSGLQNYIEIDSPIQPMISTPRRVSTPSSVQDISRLIENMAGPSVSPPSPITAMPQNPTTTCHTTDNALREAASPQMLALEELGFRKIFMVFAYLASEKIENVLSVDYIRSLKFLSMAQFESQIWRTFGHKYIAASDRAKNLDSDPGMTKVYHCNVAIRGDTVVKIFKGPYIENTRTHLQKVVGDDNVLVVKFMGKLSDTKTDFSTYCEHYHKVAEDGIVLGLRRYRFFVYKDGGKEEKLKQEKIEDKNKCTSPVMCYFVRTESGWNMDEPYILSGRTVGQARELFMHISSAPTLAKYMARFALILSKTITWDADLSAVYVRRIKDEPCMDRHGNVVHKDQEPLIHTDGTGLVSVDLALNCPTSIFKGKFLKPQPLLMQFRLFYNGSAVKGTVLVDRRLPPATILIRPSMVKIETHPELSGVRSVNSSEIVSARNAKKSLSGVQSVNSFEIVSTSNRPRRTLTSRFLITLLCYGGVPEEYFLELLQSAIEGAENACYDYEDALRIAFSYADMEDSMSARMILSGIPLEESYLQHRLDFMAQQERKGIKQGKIPIDECYYLMDTTDPTGTLRPNEVCVILENGQFSGDVLVYKHPGLHFGDIHVLKATYIRDLEKEYVGYAKYAILFPISGPRSLADEMANSDFDGDIYWVSKNPKLLEHFKPSEPWVQAIKPKKTKQKKPQDCNESKLERLLFHEFLKTRFTPSFALGTAADSWLAYMDRLLTDSLDEIEKKLIEEKMLKLVDLYYLALDAPKTGNKVNIPSDLMVKQYPHFMGRSFSYHSSSILGQIYDKAEDVESLRSCNVQPIGVSLLPCFMEREAPPAARHLWQHRYEEYLTDSTMLYRAMVDKEERNMKFQELYEKYKHMLYDASEFEQTQRDPDDVFSEACVIYQIVYEKARWSNDASRCGFAWKVAGRALCHFYALKNEGDTALCSLPLLR</sequence>
<name>RDR3_ORYSJ</name>
<reference key="1">
    <citation type="journal article" date="2002" name="Nature">
        <title>The genome sequence and structure of rice chromosome 1.</title>
        <authorList>
            <person name="Sasaki T."/>
            <person name="Matsumoto T."/>
            <person name="Yamamoto K."/>
            <person name="Sakata K."/>
            <person name="Baba T."/>
            <person name="Katayose Y."/>
            <person name="Wu J."/>
            <person name="Niimura Y."/>
            <person name="Cheng Z."/>
            <person name="Nagamura Y."/>
            <person name="Antonio B.A."/>
            <person name="Kanamori H."/>
            <person name="Hosokawa S."/>
            <person name="Masukawa M."/>
            <person name="Arikawa K."/>
            <person name="Chiden Y."/>
            <person name="Hayashi M."/>
            <person name="Okamoto M."/>
            <person name="Ando T."/>
            <person name="Aoki H."/>
            <person name="Arita K."/>
            <person name="Hamada M."/>
            <person name="Harada C."/>
            <person name="Hijishita S."/>
            <person name="Honda M."/>
            <person name="Ichikawa Y."/>
            <person name="Idonuma A."/>
            <person name="Iijima M."/>
            <person name="Ikeda M."/>
            <person name="Ikeno M."/>
            <person name="Ito S."/>
            <person name="Ito T."/>
            <person name="Ito Y."/>
            <person name="Ito Y."/>
            <person name="Iwabuchi A."/>
            <person name="Kamiya K."/>
            <person name="Karasawa W."/>
            <person name="Katagiri S."/>
            <person name="Kikuta A."/>
            <person name="Kobayashi N."/>
            <person name="Kono I."/>
            <person name="Machita K."/>
            <person name="Maehara T."/>
            <person name="Mizuno H."/>
            <person name="Mizubayashi T."/>
            <person name="Mukai Y."/>
            <person name="Nagasaki H."/>
            <person name="Nakashima M."/>
            <person name="Nakama Y."/>
            <person name="Nakamichi Y."/>
            <person name="Nakamura M."/>
            <person name="Namiki N."/>
            <person name="Negishi M."/>
            <person name="Ohta I."/>
            <person name="Ono N."/>
            <person name="Saji S."/>
            <person name="Sakai K."/>
            <person name="Shibata M."/>
            <person name="Shimokawa T."/>
            <person name="Shomura A."/>
            <person name="Song J."/>
            <person name="Takazaki Y."/>
            <person name="Terasawa K."/>
            <person name="Tsuji K."/>
            <person name="Waki K."/>
            <person name="Yamagata H."/>
            <person name="Yamane H."/>
            <person name="Yoshiki S."/>
            <person name="Yoshihara R."/>
            <person name="Yukawa K."/>
            <person name="Zhong H."/>
            <person name="Iwama H."/>
            <person name="Endo T."/>
            <person name="Ito H."/>
            <person name="Hahn J.H."/>
            <person name="Kim H.-I."/>
            <person name="Eun M.-Y."/>
            <person name="Yano M."/>
            <person name="Jiang J."/>
            <person name="Gojobori T."/>
        </authorList>
    </citation>
    <scope>NUCLEOTIDE SEQUENCE [LARGE SCALE GENOMIC DNA]</scope>
    <source>
        <strain>cv. Nipponbare</strain>
    </source>
</reference>
<reference key="2">
    <citation type="journal article" date="2005" name="Nature">
        <title>The map-based sequence of the rice genome.</title>
        <authorList>
            <consortium name="International rice genome sequencing project (IRGSP)"/>
        </authorList>
    </citation>
    <scope>NUCLEOTIDE SEQUENCE [LARGE SCALE GENOMIC DNA]</scope>
    <source>
        <strain>cv. Nipponbare</strain>
    </source>
</reference>
<reference key="3">
    <citation type="journal article" date="2008" name="Nucleic Acids Res.">
        <title>The rice annotation project database (RAP-DB): 2008 update.</title>
        <authorList>
            <consortium name="The rice annotation project (RAP)"/>
        </authorList>
    </citation>
    <scope>GENOME REANNOTATION</scope>
    <source>
        <strain>cv. Nipponbare</strain>
    </source>
</reference>
<reference key="4">
    <citation type="journal article" date="2013" name="Rice">
        <title>Improvement of the Oryza sativa Nipponbare reference genome using next generation sequence and optical map data.</title>
        <authorList>
            <person name="Kawahara Y."/>
            <person name="de la Bastide M."/>
            <person name="Hamilton J.P."/>
            <person name="Kanamori H."/>
            <person name="McCombie W.R."/>
            <person name="Ouyang S."/>
            <person name="Schwartz D.C."/>
            <person name="Tanaka T."/>
            <person name="Wu J."/>
            <person name="Zhou S."/>
            <person name="Childs K.L."/>
            <person name="Davidson R.M."/>
            <person name="Lin H."/>
            <person name="Quesada-Ocampo L."/>
            <person name="Vaillancourt B."/>
            <person name="Sakai H."/>
            <person name="Lee S.S."/>
            <person name="Kim J."/>
            <person name="Numa H."/>
            <person name="Itoh T."/>
            <person name="Buell C.R."/>
            <person name="Matsumoto T."/>
        </authorList>
    </citation>
    <scope>GENOME REANNOTATION</scope>
    <source>
        <strain>cv. Nipponbare</strain>
    </source>
</reference>
<reference key="5">
    <citation type="journal article" date="2005" name="PLoS Biol.">
        <title>The genomes of Oryza sativa: a history of duplications.</title>
        <authorList>
            <person name="Yu J."/>
            <person name="Wang J."/>
            <person name="Lin W."/>
            <person name="Li S."/>
            <person name="Li H."/>
            <person name="Zhou J."/>
            <person name="Ni P."/>
            <person name="Dong W."/>
            <person name="Hu S."/>
            <person name="Zeng C."/>
            <person name="Zhang J."/>
            <person name="Zhang Y."/>
            <person name="Li R."/>
            <person name="Xu Z."/>
            <person name="Li S."/>
            <person name="Li X."/>
            <person name="Zheng H."/>
            <person name="Cong L."/>
            <person name="Lin L."/>
            <person name="Yin J."/>
            <person name="Geng J."/>
            <person name="Li G."/>
            <person name="Shi J."/>
            <person name="Liu J."/>
            <person name="Lv H."/>
            <person name="Li J."/>
            <person name="Wang J."/>
            <person name="Deng Y."/>
            <person name="Ran L."/>
            <person name="Shi X."/>
            <person name="Wang X."/>
            <person name="Wu Q."/>
            <person name="Li C."/>
            <person name="Ren X."/>
            <person name="Wang J."/>
            <person name="Wang X."/>
            <person name="Li D."/>
            <person name="Liu D."/>
            <person name="Zhang X."/>
            <person name="Ji Z."/>
            <person name="Zhao W."/>
            <person name="Sun Y."/>
            <person name="Zhang Z."/>
            <person name="Bao J."/>
            <person name="Han Y."/>
            <person name="Dong L."/>
            <person name="Ji J."/>
            <person name="Chen P."/>
            <person name="Wu S."/>
            <person name="Liu J."/>
            <person name="Xiao Y."/>
            <person name="Bu D."/>
            <person name="Tan J."/>
            <person name="Yang L."/>
            <person name="Ye C."/>
            <person name="Zhang J."/>
            <person name="Xu J."/>
            <person name="Zhou Y."/>
            <person name="Yu Y."/>
            <person name="Zhang B."/>
            <person name="Zhuang S."/>
            <person name="Wei H."/>
            <person name="Liu B."/>
            <person name="Lei M."/>
            <person name="Yu H."/>
            <person name="Li Y."/>
            <person name="Xu H."/>
            <person name="Wei S."/>
            <person name="He X."/>
            <person name="Fang L."/>
            <person name="Zhang Z."/>
            <person name="Zhang Y."/>
            <person name="Huang X."/>
            <person name="Su Z."/>
            <person name="Tong W."/>
            <person name="Li J."/>
            <person name="Tong Z."/>
            <person name="Li S."/>
            <person name="Ye J."/>
            <person name="Wang L."/>
            <person name="Fang L."/>
            <person name="Lei T."/>
            <person name="Chen C.-S."/>
            <person name="Chen H.-C."/>
            <person name="Xu Z."/>
            <person name="Li H."/>
            <person name="Huang H."/>
            <person name="Zhang F."/>
            <person name="Xu H."/>
            <person name="Li N."/>
            <person name="Zhao C."/>
            <person name="Li S."/>
            <person name="Dong L."/>
            <person name="Huang Y."/>
            <person name="Li L."/>
            <person name="Xi Y."/>
            <person name="Qi Q."/>
            <person name="Li W."/>
            <person name="Zhang B."/>
            <person name="Hu W."/>
            <person name="Zhang Y."/>
            <person name="Tian X."/>
            <person name="Jiao Y."/>
            <person name="Liang X."/>
            <person name="Jin J."/>
            <person name="Gao L."/>
            <person name="Zheng W."/>
            <person name="Hao B."/>
            <person name="Liu S.-M."/>
            <person name="Wang W."/>
            <person name="Yuan L."/>
            <person name="Cao M."/>
            <person name="McDermott J."/>
            <person name="Samudrala R."/>
            <person name="Wang J."/>
            <person name="Wong G.K.-S."/>
            <person name="Yang H."/>
        </authorList>
    </citation>
    <scope>NUCLEOTIDE SEQUENCE [LARGE SCALE GENOMIC DNA]</scope>
    <source>
        <strain>cv. Nipponbare</strain>
    </source>
</reference>
<reference key="6">
    <citation type="journal article" date="2003" name="Science">
        <title>Collection, mapping, and annotation of over 28,000 cDNA clones from japonica rice.</title>
        <authorList>
            <consortium name="The rice full-length cDNA consortium"/>
        </authorList>
    </citation>
    <scope>NUCLEOTIDE SEQUENCE [LARGE SCALE MRNA] OF 776-1153</scope>
    <source>
        <strain>cv. Nipponbare</strain>
    </source>
</reference>
<reference key="7">
    <citation type="journal article" date="2008" name="BMC Genomics">
        <title>Genome-wide identification, organization and phylogenetic analysis of dicer-like, argonaute and RNA-dependent RNA polymerase gene families and their expression analysis during reproductive development and stress in rice.</title>
        <authorList>
            <person name="Kapoor M."/>
            <person name="Arora R."/>
            <person name="Lama T."/>
            <person name="Nijhawan A."/>
            <person name="Khurana J.P."/>
            <person name="Tyagi A.K."/>
            <person name="Kapoor S."/>
        </authorList>
    </citation>
    <scope>TISSUE SPECIFICITY</scope>
    <scope>GENE FAMILY</scope>
    <scope>NOMENCLATURE</scope>
</reference>
<feature type="chain" id="PRO_0000378447" description="Probable RNA-dependent RNA polymerase 3">
    <location>
        <begin position="1"/>
        <end position="1153"/>
    </location>
</feature>
<feature type="sequence conflict" description="In Ref. 6; AK105570." evidence="3" ref="6">
    <original>P</original>
    <variation>S</variation>
    <location>
        <position position="809"/>
    </location>
</feature>
<proteinExistence type="evidence at transcript level"/>
<comment type="function">
    <text evidence="1">Probably involved in the RNA silencing pathway and required for the generation of small interfering RNAs (siRNAs).</text>
</comment>
<comment type="catalytic activity">
    <reaction>
        <text>RNA(n) + a ribonucleoside 5'-triphosphate = RNA(n+1) + diphosphate</text>
        <dbReference type="Rhea" id="RHEA:21248"/>
        <dbReference type="Rhea" id="RHEA-COMP:14527"/>
        <dbReference type="Rhea" id="RHEA-COMP:17342"/>
        <dbReference type="ChEBI" id="CHEBI:33019"/>
        <dbReference type="ChEBI" id="CHEBI:61557"/>
        <dbReference type="ChEBI" id="CHEBI:140395"/>
        <dbReference type="EC" id="2.7.7.48"/>
    </reaction>
</comment>
<comment type="tissue specificity">
    <text evidence="2">Expressed in shoot apical meristem (SAM) and panicles.</text>
</comment>
<comment type="similarity">
    <text evidence="3">Belongs to the RdRP family.</text>
</comment>
<comment type="sequence caution" evidence="3">
    <conflict type="erroneous gene model prediction">
        <sequence resource="EMBL-CDS" id="BAD73220"/>
    </conflict>
</comment>
<comment type="sequence caution" evidence="3">
    <conflict type="erroneous gene model prediction">
        <sequence resource="EMBL-CDS" id="BAD73221"/>
    </conflict>
</comment>
<comment type="sequence caution" evidence="3">
    <conflict type="erroneous gene model prediction">
        <sequence resource="EMBL-CDS" id="BAD73327"/>
    </conflict>
</comment>
<comment type="sequence caution" evidence="3">
    <conflict type="erroneous gene model prediction">
        <sequence resource="EMBL-CDS" id="BAD73328"/>
    </conflict>
</comment>
<comment type="sequence caution" evidence="3">
    <conflict type="erroneous gene model prediction">
        <sequence resource="EMBL-CDS" id="BAF04217"/>
    </conflict>
</comment>
<comment type="sequence caution" evidence="3">
    <conflict type="erroneous gene model prediction">
        <sequence resource="EMBL-CDS" id="EEE54052"/>
    </conflict>
</comment>
<keyword id="KW-0548">Nucleotidyltransferase</keyword>
<keyword id="KW-1185">Reference proteome</keyword>
<keyword id="KW-0694">RNA-binding</keyword>
<keyword id="KW-0696">RNA-directed RNA polymerase</keyword>
<keyword id="KW-0943">RNA-mediated gene silencing</keyword>
<keyword id="KW-0808">Transferase</keyword>
<evidence type="ECO:0000250" key="1"/>
<evidence type="ECO:0000269" key="2">
    <source>
    </source>
</evidence>
<evidence type="ECO:0000305" key="3"/>
<accession>Q5QMN5</accession>
<accession>B9ETN1</accession>
<accession>Q5QMN6</accession>